<proteinExistence type="inferred from homology"/>
<protein>
    <recommendedName>
        <fullName evidence="1">Large ribosomal subunit protein uL29</fullName>
    </recommendedName>
    <alternativeName>
        <fullName evidence="2">50S ribosomal protein L29</fullName>
    </alternativeName>
</protein>
<sequence>MAILRSKEIWDMEVDEIQDKLVELRAELSKNVSKSAAAGVIENPGKIRELKRTIARVLTILNEKQKEN</sequence>
<accession>A5UL82</accession>
<gene>
    <name evidence="1" type="primary">rpl29</name>
    <name type="ordered locus">Msm_0755</name>
</gene>
<keyword id="KW-0687">Ribonucleoprotein</keyword>
<keyword id="KW-0689">Ribosomal protein</keyword>
<feature type="chain" id="PRO_1000007523" description="Large ribosomal subunit protein uL29">
    <location>
        <begin position="1"/>
        <end position="68"/>
    </location>
</feature>
<reference key="1">
    <citation type="journal article" date="2007" name="Proc. Natl. Acad. Sci. U.S.A.">
        <title>Genomic and metabolic adaptations of Methanobrevibacter smithii to the human gut.</title>
        <authorList>
            <person name="Samuel B.S."/>
            <person name="Hansen E.E."/>
            <person name="Manchester J.K."/>
            <person name="Coutinho P.M."/>
            <person name="Henrissat B."/>
            <person name="Fulton R."/>
            <person name="Latreille P."/>
            <person name="Kim K."/>
            <person name="Wilson R.K."/>
            <person name="Gordon J.I."/>
        </authorList>
    </citation>
    <scope>NUCLEOTIDE SEQUENCE [LARGE SCALE GENOMIC DNA]</scope>
    <source>
        <strain>ATCC 35061 / DSM 861 / OCM 144 / PS</strain>
    </source>
</reference>
<dbReference type="EMBL" id="CP000678">
    <property type="protein sequence ID" value="ABQ86960.1"/>
    <property type="molecule type" value="Genomic_DNA"/>
</dbReference>
<dbReference type="SMR" id="A5UL82"/>
<dbReference type="STRING" id="420247.Msm_0755"/>
<dbReference type="EnsemblBacteria" id="ABQ86960">
    <property type="protein sequence ID" value="ABQ86960"/>
    <property type="gene ID" value="Msm_0755"/>
</dbReference>
<dbReference type="KEGG" id="msi:Msm_0755"/>
<dbReference type="PATRIC" id="fig|420247.28.peg.752"/>
<dbReference type="eggNOG" id="arCOG00785">
    <property type="taxonomic scope" value="Archaea"/>
</dbReference>
<dbReference type="HOGENOM" id="CLU_158491_2_2_2"/>
<dbReference type="Proteomes" id="UP000001992">
    <property type="component" value="Chromosome"/>
</dbReference>
<dbReference type="GO" id="GO:1990904">
    <property type="term" value="C:ribonucleoprotein complex"/>
    <property type="evidence" value="ECO:0007669"/>
    <property type="project" value="UniProtKB-KW"/>
</dbReference>
<dbReference type="GO" id="GO:0005840">
    <property type="term" value="C:ribosome"/>
    <property type="evidence" value="ECO:0007669"/>
    <property type="project" value="UniProtKB-KW"/>
</dbReference>
<dbReference type="GO" id="GO:0003735">
    <property type="term" value="F:structural constituent of ribosome"/>
    <property type="evidence" value="ECO:0007669"/>
    <property type="project" value="InterPro"/>
</dbReference>
<dbReference type="GO" id="GO:0006412">
    <property type="term" value="P:translation"/>
    <property type="evidence" value="ECO:0007669"/>
    <property type="project" value="UniProtKB-UniRule"/>
</dbReference>
<dbReference type="CDD" id="cd00427">
    <property type="entry name" value="Ribosomal_L29_HIP"/>
    <property type="match status" value="1"/>
</dbReference>
<dbReference type="Gene3D" id="1.10.287.310">
    <property type="match status" value="1"/>
</dbReference>
<dbReference type="HAMAP" id="MF_00374">
    <property type="entry name" value="Ribosomal_uL29"/>
    <property type="match status" value="1"/>
</dbReference>
<dbReference type="InterPro" id="IPR001854">
    <property type="entry name" value="Ribosomal_uL29"/>
</dbReference>
<dbReference type="InterPro" id="IPR018254">
    <property type="entry name" value="Ribosomal_uL29_CS"/>
</dbReference>
<dbReference type="InterPro" id="IPR036049">
    <property type="entry name" value="Ribosomal_uL29_sf"/>
</dbReference>
<dbReference type="NCBIfam" id="TIGR00012">
    <property type="entry name" value="L29"/>
    <property type="match status" value="1"/>
</dbReference>
<dbReference type="Pfam" id="PF00831">
    <property type="entry name" value="Ribosomal_L29"/>
    <property type="match status" value="1"/>
</dbReference>
<dbReference type="SUPFAM" id="SSF46561">
    <property type="entry name" value="Ribosomal protein L29 (L29p)"/>
    <property type="match status" value="1"/>
</dbReference>
<dbReference type="PROSITE" id="PS00579">
    <property type="entry name" value="RIBOSOMAL_L29"/>
    <property type="match status" value="1"/>
</dbReference>
<comment type="similarity">
    <text evidence="1">Belongs to the universal ribosomal protein uL29 family.</text>
</comment>
<organism>
    <name type="scientific">Methanobrevibacter smithii (strain ATCC 35061 / DSM 861 / OCM 144 / PS)</name>
    <dbReference type="NCBI Taxonomy" id="420247"/>
    <lineage>
        <taxon>Archaea</taxon>
        <taxon>Methanobacteriati</taxon>
        <taxon>Methanobacteriota</taxon>
        <taxon>Methanomada group</taxon>
        <taxon>Methanobacteria</taxon>
        <taxon>Methanobacteriales</taxon>
        <taxon>Methanobacteriaceae</taxon>
        <taxon>Methanobrevibacter</taxon>
    </lineage>
</organism>
<name>RL29_METS3</name>
<evidence type="ECO:0000255" key="1">
    <source>
        <dbReference type="HAMAP-Rule" id="MF_00374"/>
    </source>
</evidence>
<evidence type="ECO:0000305" key="2"/>